<name>CYB_PUSSI</name>
<feature type="chain" id="PRO_0000254845" description="Cytochrome b">
    <location>
        <begin position="1"/>
        <end position="379"/>
    </location>
</feature>
<feature type="transmembrane region" description="Helical" evidence="2">
    <location>
        <begin position="33"/>
        <end position="53"/>
    </location>
</feature>
<feature type="transmembrane region" description="Helical" evidence="2">
    <location>
        <begin position="77"/>
        <end position="98"/>
    </location>
</feature>
<feature type="transmembrane region" description="Helical" evidence="2">
    <location>
        <begin position="113"/>
        <end position="133"/>
    </location>
</feature>
<feature type="transmembrane region" description="Helical" evidence="2">
    <location>
        <begin position="178"/>
        <end position="198"/>
    </location>
</feature>
<feature type="transmembrane region" description="Helical" evidence="2">
    <location>
        <begin position="226"/>
        <end position="246"/>
    </location>
</feature>
<feature type="transmembrane region" description="Helical" evidence="2">
    <location>
        <begin position="288"/>
        <end position="308"/>
    </location>
</feature>
<feature type="transmembrane region" description="Helical" evidence="2">
    <location>
        <begin position="320"/>
        <end position="340"/>
    </location>
</feature>
<feature type="transmembrane region" description="Helical" evidence="2">
    <location>
        <begin position="347"/>
        <end position="367"/>
    </location>
</feature>
<feature type="binding site" description="axial binding residue" evidence="2">
    <location>
        <position position="83"/>
    </location>
    <ligand>
        <name>heme b</name>
        <dbReference type="ChEBI" id="CHEBI:60344"/>
        <label>b562</label>
    </ligand>
    <ligandPart>
        <name>Fe</name>
        <dbReference type="ChEBI" id="CHEBI:18248"/>
    </ligandPart>
</feature>
<feature type="binding site" description="axial binding residue" evidence="2">
    <location>
        <position position="97"/>
    </location>
    <ligand>
        <name>heme b</name>
        <dbReference type="ChEBI" id="CHEBI:60344"/>
        <label>b566</label>
    </ligand>
    <ligandPart>
        <name>Fe</name>
        <dbReference type="ChEBI" id="CHEBI:18248"/>
    </ligandPart>
</feature>
<feature type="binding site" description="axial binding residue" evidence="2">
    <location>
        <position position="182"/>
    </location>
    <ligand>
        <name>heme b</name>
        <dbReference type="ChEBI" id="CHEBI:60344"/>
        <label>b562</label>
    </ligand>
    <ligandPart>
        <name>Fe</name>
        <dbReference type="ChEBI" id="CHEBI:18248"/>
    </ligandPart>
</feature>
<feature type="binding site" description="axial binding residue" evidence="2">
    <location>
        <position position="196"/>
    </location>
    <ligand>
        <name>heme b</name>
        <dbReference type="ChEBI" id="CHEBI:60344"/>
        <label>b566</label>
    </ligand>
    <ligandPart>
        <name>Fe</name>
        <dbReference type="ChEBI" id="CHEBI:18248"/>
    </ligandPart>
</feature>
<feature type="binding site" evidence="2">
    <location>
        <position position="201"/>
    </location>
    <ligand>
        <name>a ubiquinone</name>
        <dbReference type="ChEBI" id="CHEBI:16389"/>
    </ligand>
</feature>
<sequence>MTNIRKTHPLMKIINNSFIDLPAPSNISAWWNFGSLLGICLILQILTGLFLAMHYTSDTTTAFSSVTHICRDVNYGWIIRYLHANGASMFFICLYMHVGRGLYYGSYTFTETWNIGIILLFTVMATAFMGYVLPWGQMSFWGATVITNLLSAIPYVGTDLVQWIWGGFSVDKATLTRFFAFHFILPFVVLALAAVHLLFLHETGSNNPSGITSDSDKIPFHPYYTIKDILGALLLILVLTLLVLFSPDLLGDPDNYIPANPLSTPPHIKPEWYFLFAYAILRSIPNKLGGVLALVLSILILAIVPLLHTSKQRGMMFRPISQCLFWLLVADLLTLTWIGGQPVEHPYITIGQLASILYFMILLVLMPIASIIENNILKW</sequence>
<comment type="function">
    <text evidence="2">Component of the ubiquinol-cytochrome c reductase complex (complex III or cytochrome b-c1 complex) that is part of the mitochondrial respiratory chain. The b-c1 complex mediates electron transfer from ubiquinol to cytochrome c. Contributes to the generation of a proton gradient across the mitochondrial membrane that is then used for ATP synthesis.</text>
</comment>
<comment type="cofactor">
    <cofactor evidence="2">
        <name>heme b</name>
        <dbReference type="ChEBI" id="CHEBI:60344"/>
    </cofactor>
    <text evidence="2">Binds 2 heme b groups non-covalently.</text>
</comment>
<comment type="subunit">
    <text evidence="2">The cytochrome bc1 complex contains 11 subunits: 3 respiratory subunits (MT-CYB, CYC1 and UQCRFS1), 2 core proteins (UQCRC1 and UQCRC2) and 6 low-molecular weight proteins (UQCRH/QCR6, UQCRB/QCR7, UQCRQ/QCR8, UQCR10/QCR9, UQCR11/QCR10 and a cleavage product of UQCRFS1). This cytochrome bc1 complex then forms a dimer.</text>
</comment>
<comment type="subcellular location">
    <subcellularLocation>
        <location evidence="2">Mitochondrion inner membrane</location>
        <topology evidence="2">Multi-pass membrane protein</topology>
    </subcellularLocation>
</comment>
<comment type="miscellaneous">
    <text evidence="1">Heme 1 (or BL or b562) is low-potential and absorbs at about 562 nm, and heme 2 (or BH or b566) is high-potential and absorbs at about 566 nm.</text>
</comment>
<comment type="similarity">
    <text evidence="3 4">Belongs to the cytochrome b family.</text>
</comment>
<comment type="caution">
    <text evidence="2">The full-length protein contains only eight transmembrane helices, not nine as predicted by bioinformatics tools.</text>
</comment>
<protein>
    <recommendedName>
        <fullName>Cytochrome b</fullName>
    </recommendedName>
    <alternativeName>
        <fullName>Complex III subunit 3</fullName>
    </alternativeName>
    <alternativeName>
        <fullName>Complex III subunit III</fullName>
    </alternativeName>
    <alternativeName>
        <fullName>Cytochrome b-c1 complex subunit 3</fullName>
    </alternativeName>
    <alternativeName>
        <fullName>Ubiquinol-cytochrome-c reductase complex cytochrome b subunit</fullName>
    </alternativeName>
</protein>
<organism>
    <name type="scientific">Pusa sibirica</name>
    <name type="common">Baikal seal</name>
    <name type="synonym">Phoca sibirica</name>
    <dbReference type="NCBI Taxonomy" id="9719"/>
    <lineage>
        <taxon>Eukaryota</taxon>
        <taxon>Metazoa</taxon>
        <taxon>Chordata</taxon>
        <taxon>Craniata</taxon>
        <taxon>Vertebrata</taxon>
        <taxon>Euteleostomi</taxon>
        <taxon>Mammalia</taxon>
        <taxon>Eutheria</taxon>
        <taxon>Laurasiatheria</taxon>
        <taxon>Carnivora</taxon>
        <taxon>Caniformia</taxon>
        <taxon>Pinnipedia</taxon>
        <taxon>Phocidae</taxon>
        <taxon>Phocinae</taxon>
        <taxon>Pusa</taxon>
    </lineage>
</organism>
<geneLocation type="mitochondrion"/>
<proteinExistence type="inferred from homology"/>
<gene>
    <name type="primary">MT-CYB</name>
    <name type="synonym">COB</name>
    <name type="synonym">CYTB</name>
    <name type="synonym">MTCYB</name>
</gene>
<evidence type="ECO:0000250" key="1"/>
<evidence type="ECO:0000250" key="2">
    <source>
        <dbReference type="UniProtKB" id="P00157"/>
    </source>
</evidence>
<evidence type="ECO:0000255" key="3">
    <source>
        <dbReference type="PROSITE-ProRule" id="PRU00967"/>
    </source>
</evidence>
<evidence type="ECO:0000255" key="4">
    <source>
        <dbReference type="PROSITE-ProRule" id="PRU00968"/>
    </source>
</evidence>
<keyword id="KW-0249">Electron transport</keyword>
<keyword id="KW-0349">Heme</keyword>
<keyword id="KW-0408">Iron</keyword>
<keyword id="KW-0472">Membrane</keyword>
<keyword id="KW-0479">Metal-binding</keyword>
<keyword id="KW-0496">Mitochondrion</keyword>
<keyword id="KW-0999">Mitochondrion inner membrane</keyword>
<keyword id="KW-0679">Respiratory chain</keyword>
<keyword id="KW-0812">Transmembrane</keyword>
<keyword id="KW-1133">Transmembrane helix</keyword>
<keyword id="KW-0813">Transport</keyword>
<keyword id="KW-0830">Ubiquinone</keyword>
<accession>Q2TVN1</accession>
<reference key="1">
    <citation type="journal article" date="2006" name="Biol. J. Linn. Soc. Lond.">
        <title>The enigma of the landlocked Baikal and Caspian seals addressed through phylogeny of phocine mitochondrial sequences.</title>
        <authorList>
            <person name="Palo J.U."/>
            <person name="Vainola R."/>
        </authorList>
    </citation>
    <scope>NUCLEOTIDE SEQUENCE [GENOMIC DNA]</scope>
</reference>
<reference key="2">
    <citation type="journal article" date="2006" name="Mol. Phylogenet. Evol.">
        <title>Pinniped phylogeny and a new hypothesis for their origin and dispersal.</title>
        <authorList>
            <person name="Arnason U."/>
            <person name="Gullberg A."/>
            <person name="Janke A."/>
            <person name="Kullberg M."/>
            <person name="Lehman N."/>
            <person name="Petrov E.A."/>
            <person name="Vainola R."/>
        </authorList>
    </citation>
    <scope>NUCLEOTIDE SEQUENCE [GENOMIC DNA]</scope>
</reference>
<dbReference type="EMBL" id="AY140977">
    <property type="protein sequence ID" value="AAN46149.1"/>
    <property type="molecule type" value="Genomic_DNA"/>
</dbReference>
<dbReference type="EMBL" id="AM181034">
    <property type="protein sequence ID" value="CAJ57117.1"/>
    <property type="molecule type" value="Genomic_DNA"/>
</dbReference>
<dbReference type="RefSeq" id="YP_778915.1">
    <property type="nucleotide sequence ID" value="NC_008432.1"/>
</dbReference>
<dbReference type="SMR" id="Q2TVN1"/>
<dbReference type="GeneID" id="4355946"/>
<dbReference type="CTD" id="4519"/>
<dbReference type="GO" id="GO:0005743">
    <property type="term" value="C:mitochondrial inner membrane"/>
    <property type="evidence" value="ECO:0007669"/>
    <property type="project" value="UniProtKB-SubCell"/>
</dbReference>
<dbReference type="GO" id="GO:0045275">
    <property type="term" value="C:respiratory chain complex III"/>
    <property type="evidence" value="ECO:0007669"/>
    <property type="project" value="InterPro"/>
</dbReference>
<dbReference type="GO" id="GO:0046872">
    <property type="term" value="F:metal ion binding"/>
    <property type="evidence" value="ECO:0007669"/>
    <property type="project" value="UniProtKB-KW"/>
</dbReference>
<dbReference type="GO" id="GO:0008121">
    <property type="term" value="F:ubiquinol-cytochrome-c reductase activity"/>
    <property type="evidence" value="ECO:0007669"/>
    <property type="project" value="InterPro"/>
</dbReference>
<dbReference type="GO" id="GO:0006122">
    <property type="term" value="P:mitochondrial electron transport, ubiquinol to cytochrome c"/>
    <property type="evidence" value="ECO:0007669"/>
    <property type="project" value="TreeGrafter"/>
</dbReference>
<dbReference type="CDD" id="cd00290">
    <property type="entry name" value="cytochrome_b_C"/>
    <property type="match status" value="1"/>
</dbReference>
<dbReference type="CDD" id="cd00284">
    <property type="entry name" value="Cytochrome_b_N"/>
    <property type="match status" value="1"/>
</dbReference>
<dbReference type="FunFam" id="1.20.810.10:FF:000002">
    <property type="entry name" value="Cytochrome b"/>
    <property type="match status" value="1"/>
</dbReference>
<dbReference type="Gene3D" id="1.20.810.10">
    <property type="entry name" value="Cytochrome Bc1 Complex, Chain C"/>
    <property type="match status" value="1"/>
</dbReference>
<dbReference type="InterPro" id="IPR005798">
    <property type="entry name" value="Cyt_b/b6_C"/>
</dbReference>
<dbReference type="InterPro" id="IPR036150">
    <property type="entry name" value="Cyt_b/b6_C_sf"/>
</dbReference>
<dbReference type="InterPro" id="IPR005797">
    <property type="entry name" value="Cyt_b/b6_N"/>
</dbReference>
<dbReference type="InterPro" id="IPR027387">
    <property type="entry name" value="Cytb/b6-like_sf"/>
</dbReference>
<dbReference type="InterPro" id="IPR030689">
    <property type="entry name" value="Cytochrome_b"/>
</dbReference>
<dbReference type="InterPro" id="IPR048260">
    <property type="entry name" value="Cytochrome_b_C_euk/bac"/>
</dbReference>
<dbReference type="InterPro" id="IPR048259">
    <property type="entry name" value="Cytochrome_b_N_euk/bac"/>
</dbReference>
<dbReference type="InterPro" id="IPR016174">
    <property type="entry name" value="Di-haem_cyt_TM"/>
</dbReference>
<dbReference type="PANTHER" id="PTHR19271">
    <property type="entry name" value="CYTOCHROME B"/>
    <property type="match status" value="1"/>
</dbReference>
<dbReference type="PANTHER" id="PTHR19271:SF16">
    <property type="entry name" value="CYTOCHROME B"/>
    <property type="match status" value="1"/>
</dbReference>
<dbReference type="Pfam" id="PF00032">
    <property type="entry name" value="Cytochrom_B_C"/>
    <property type="match status" value="1"/>
</dbReference>
<dbReference type="Pfam" id="PF00033">
    <property type="entry name" value="Cytochrome_B"/>
    <property type="match status" value="1"/>
</dbReference>
<dbReference type="PIRSF" id="PIRSF038885">
    <property type="entry name" value="COB"/>
    <property type="match status" value="1"/>
</dbReference>
<dbReference type="SUPFAM" id="SSF81648">
    <property type="entry name" value="a domain/subunit of cytochrome bc1 complex (Ubiquinol-cytochrome c reductase)"/>
    <property type="match status" value="1"/>
</dbReference>
<dbReference type="SUPFAM" id="SSF81342">
    <property type="entry name" value="Transmembrane di-heme cytochromes"/>
    <property type="match status" value="1"/>
</dbReference>
<dbReference type="PROSITE" id="PS51003">
    <property type="entry name" value="CYTB_CTER"/>
    <property type="match status" value="1"/>
</dbReference>
<dbReference type="PROSITE" id="PS51002">
    <property type="entry name" value="CYTB_NTER"/>
    <property type="match status" value="1"/>
</dbReference>